<sequence>MPKRLDINTILVIGSGPIVIGQAAEFDYSGTQACQSLKEEGYKVILVNSNPATIMTDTATADKVYIEPLTLEFVSRIIRKERPDAILPTLGGQTGLNMAVELAKSGVLEECGVEILGTKLSAIEQAEDRDLFRTLMQELNEPTPPSEIIHNLDEAYGFVNEIGYPVIVRPAFTLGGTGGGICHNEEELIEIVTSGLKHSPVTQCLLEKSIAGCKEIEYEVMRDSNDNAIVVCNMENIDPVGVHTGDSIVVAPSQTLSDREYQMLRNTSLRIIRALGIEGGCNVQLALDPYSFQYYVIEVNPRVSRSSALASKATGYPIAKLAAKIAVGLTLDEIVNPVTQKTYACFEPALDYVVSKIPRWPFDKFESANRTLGTQMKATGEVMSIGRNLEESLLKAVRSLELGIYHLELDHLKELDKETMKKRIIKADDERLFIVAEAIRQGVTKEEINEWCEMDFFFLQKVENIVNMEREVKANVGNMEVLQTAKEMGFSDHYIAAAWNKTEREIYDMRKENNMTPVFKMVDTCAAEFESATPYYYSTYADENELIVTDRKSVVVLGSGPIRIGQGVEFDYATVHSVWAIKEAGYEAIIINNNPETVSTDFSISDKLYFEPLTIEDVMHIIDLEKPEGVIVQFGGQTAINLAAKLEEHGVKILGTSLEDLDRAEDRDKFEAALTKLGIPQPVGKTATTVEQAVAIAEEIGYPVLVRPSYVLGGRAMEIVYRQEELLHYMKNAVKVHADHPVLIDRYMVGKEIEVDAISDGENVFIPGIMEHIERAGVHSGDSIGVYPPQSLSEKLKEQIIEHTIALGKGLNIVGLLNIQFVVFKDQVYVIEVNPRASRTVPFLSKITGVPMANVATKVILGQDLVEQGYGTGYHPEEKEVYVKAPVFSFAKLRSVDTTLGPEMKSTGEVMGKDLTLEKALYKGLVASGINIPTHGSVIITVADKDKEEAMEIAKRFHEIGYNLLATAGTAQSLTEQNIPVQVVNKIDSEDYNLLDIIRQGKAQFVINTLTKGKQPARDGFRIRRESVENGVACLTSLDTTRAILRVLESMTFSAHSMKEITQTKRHEVVHA</sequence>
<gene>
    <name evidence="1" type="primary">carB</name>
    <name type="ordered locus">BA_4025</name>
    <name type="ordered locus">GBAA_4025</name>
    <name type="ordered locus">BAS3737</name>
</gene>
<evidence type="ECO:0000255" key="1">
    <source>
        <dbReference type="HAMAP-Rule" id="MF_01210"/>
    </source>
</evidence>
<organism>
    <name type="scientific">Bacillus anthracis</name>
    <dbReference type="NCBI Taxonomy" id="1392"/>
    <lineage>
        <taxon>Bacteria</taxon>
        <taxon>Bacillati</taxon>
        <taxon>Bacillota</taxon>
        <taxon>Bacilli</taxon>
        <taxon>Bacillales</taxon>
        <taxon>Bacillaceae</taxon>
        <taxon>Bacillus</taxon>
        <taxon>Bacillus cereus group</taxon>
    </lineage>
</organism>
<protein>
    <recommendedName>
        <fullName evidence="1">Carbamoyl phosphate synthase large chain</fullName>
        <ecNumber evidence="1">6.3.4.16</ecNumber>
        <ecNumber evidence="1">6.3.5.5</ecNumber>
    </recommendedName>
    <alternativeName>
        <fullName evidence="1">Carbamoyl phosphate synthetase ammonia chain</fullName>
    </alternativeName>
</protein>
<feature type="chain" id="PRO_1000066337" description="Carbamoyl phosphate synthase large chain">
    <location>
        <begin position="1"/>
        <end position="1072"/>
    </location>
</feature>
<feature type="domain" description="ATP-grasp 1" evidence="1">
    <location>
        <begin position="133"/>
        <end position="327"/>
    </location>
</feature>
<feature type="domain" description="ATP-grasp 2" evidence="1">
    <location>
        <begin position="671"/>
        <end position="861"/>
    </location>
</feature>
<feature type="domain" description="MGS-like" evidence="1">
    <location>
        <begin position="930"/>
        <end position="1072"/>
    </location>
</feature>
<feature type="region of interest" description="Carboxyphosphate synthetic domain" evidence="1">
    <location>
        <begin position="1"/>
        <end position="401"/>
    </location>
</feature>
<feature type="region of interest" description="Oligomerization domain" evidence="1">
    <location>
        <begin position="402"/>
        <end position="546"/>
    </location>
</feature>
<feature type="region of interest" description="Carbamoyl phosphate synthetic domain" evidence="1">
    <location>
        <begin position="547"/>
        <end position="929"/>
    </location>
</feature>
<feature type="region of interest" description="Allosteric domain" evidence="1">
    <location>
        <begin position="930"/>
        <end position="1072"/>
    </location>
</feature>
<feature type="binding site" evidence="1">
    <location>
        <position position="129"/>
    </location>
    <ligand>
        <name>ATP</name>
        <dbReference type="ChEBI" id="CHEBI:30616"/>
        <label>1</label>
    </ligand>
</feature>
<feature type="binding site" evidence="1">
    <location>
        <position position="169"/>
    </location>
    <ligand>
        <name>ATP</name>
        <dbReference type="ChEBI" id="CHEBI:30616"/>
        <label>1</label>
    </ligand>
</feature>
<feature type="binding site" evidence="1">
    <location>
        <position position="175"/>
    </location>
    <ligand>
        <name>ATP</name>
        <dbReference type="ChEBI" id="CHEBI:30616"/>
        <label>1</label>
    </ligand>
</feature>
<feature type="binding site" evidence="1">
    <location>
        <position position="176"/>
    </location>
    <ligand>
        <name>ATP</name>
        <dbReference type="ChEBI" id="CHEBI:30616"/>
        <label>1</label>
    </ligand>
</feature>
<feature type="binding site" evidence="1">
    <location>
        <position position="208"/>
    </location>
    <ligand>
        <name>ATP</name>
        <dbReference type="ChEBI" id="CHEBI:30616"/>
        <label>1</label>
    </ligand>
</feature>
<feature type="binding site" evidence="1">
    <location>
        <position position="210"/>
    </location>
    <ligand>
        <name>ATP</name>
        <dbReference type="ChEBI" id="CHEBI:30616"/>
        <label>1</label>
    </ligand>
</feature>
<feature type="binding site" evidence="1">
    <location>
        <position position="215"/>
    </location>
    <ligand>
        <name>ATP</name>
        <dbReference type="ChEBI" id="CHEBI:30616"/>
        <label>1</label>
    </ligand>
</feature>
<feature type="binding site" evidence="1">
    <location>
        <position position="241"/>
    </location>
    <ligand>
        <name>ATP</name>
        <dbReference type="ChEBI" id="CHEBI:30616"/>
        <label>1</label>
    </ligand>
</feature>
<feature type="binding site" evidence="1">
    <location>
        <position position="242"/>
    </location>
    <ligand>
        <name>ATP</name>
        <dbReference type="ChEBI" id="CHEBI:30616"/>
        <label>1</label>
    </ligand>
</feature>
<feature type="binding site" evidence="1">
    <location>
        <position position="243"/>
    </location>
    <ligand>
        <name>ATP</name>
        <dbReference type="ChEBI" id="CHEBI:30616"/>
        <label>1</label>
    </ligand>
</feature>
<feature type="binding site" evidence="1">
    <location>
        <position position="284"/>
    </location>
    <ligand>
        <name>ATP</name>
        <dbReference type="ChEBI" id="CHEBI:30616"/>
        <label>1</label>
    </ligand>
</feature>
<feature type="binding site" evidence="1">
    <location>
        <position position="284"/>
    </location>
    <ligand>
        <name>Mg(2+)</name>
        <dbReference type="ChEBI" id="CHEBI:18420"/>
        <label>1</label>
    </ligand>
</feature>
<feature type="binding site" evidence="1">
    <location>
        <position position="284"/>
    </location>
    <ligand>
        <name>Mn(2+)</name>
        <dbReference type="ChEBI" id="CHEBI:29035"/>
        <label>1</label>
    </ligand>
</feature>
<feature type="binding site" evidence="1">
    <location>
        <position position="298"/>
    </location>
    <ligand>
        <name>ATP</name>
        <dbReference type="ChEBI" id="CHEBI:30616"/>
        <label>1</label>
    </ligand>
</feature>
<feature type="binding site" evidence="1">
    <location>
        <position position="298"/>
    </location>
    <ligand>
        <name>Mg(2+)</name>
        <dbReference type="ChEBI" id="CHEBI:18420"/>
        <label>1</label>
    </ligand>
</feature>
<feature type="binding site" evidence="1">
    <location>
        <position position="298"/>
    </location>
    <ligand>
        <name>Mg(2+)</name>
        <dbReference type="ChEBI" id="CHEBI:18420"/>
        <label>2</label>
    </ligand>
</feature>
<feature type="binding site" evidence="1">
    <location>
        <position position="298"/>
    </location>
    <ligand>
        <name>Mn(2+)</name>
        <dbReference type="ChEBI" id="CHEBI:29035"/>
        <label>1</label>
    </ligand>
</feature>
<feature type="binding site" evidence="1">
    <location>
        <position position="298"/>
    </location>
    <ligand>
        <name>Mn(2+)</name>
        <dbReference type="ChEBI" id="CHEBI:29035"/>
        <label>2</label>
    </ligand>
</feature>
<feature type="binding site" evidence="1">
    <location>
        <position position="300"/>
    </location>
    <ligand>
        <name>Mg(2+)</name>
        <dbReference type="ChEBI" id="CHEBI:18420"/>
        <label>2</label>
    </ligand>
</feature>
<feature type="binding site" evidence="1">
    <location>
        <position position="300"/>
    </location>
    <ligand>
        <name>Mn(2+)</name>
        <dbReference type="ChEBI" id="CHEBI:29035"/>
        <label>2</label>
    </ligand>
</feature>
<feature type="binding site" evidence="1">
    <location>
        <position position="707"/>
    </location>
    <ligand>
        <name>ATP</name>
        <dbReference type="ChEBI" id="CHEBI:30616"/>
        <label>2</label>
    </ligand>
</feature>
<feature type="binding site" evidence="1">
    <location>
        <position position="746"/>
    </location>
    <ligand>
        <name>ATP</name>
        <dbReference type="ChEBI" id="CHEBI:30616"/>
        <label>2</label>
    </ligand>
</feature>
<feature type="binding site" evidence="1">
    <location>
        <position position="752"/>
    </location>
    <ligand>
        <name>ATP</name>
        <dbReference type="ChEBI" id="CHEBI:30616"/>
        <label>2</label>
    </ligand>
</feature>
<feature type="binding site" evidence="1">
    <location>
        <position position="777"/>
    </location>
    <ligand>
        <name>ATP</name>
        <dbReference type="ChEBI" id="CHEBI:30616"/>
        <label>2</label>
    </ligand>
</feature>
<feature type="binding site" evidence="1">
    <location>
        <position position="778"/>
    </location>
    <ligand>
        <name>ATP</name>
        <dbReference type="ChEBI" id="CHEBI:30616"/>
        <label>2</label>
    </ligand>
</feature>
<feature type="binding site" evidence="1">
    <location>
        <position position="779"/>
    </location>
    <ligand>
        <name>ATP</name>
        <dbReference type="ChEBI" id="CHEBI:30616"/>
        <label>2</label>
    </ligand>
</feature>
<feature type="binding site" evidence="1">
    <location>
        <position position="780"/>
    </location>
    <ligand>
        <name>ATP</name>
        <dbReference type="ChEBI" id="CHEBI:30616"/>
        <label>2</label>
    </ligand>
</feature>
<feature type="binding site" evidence="1">
    <location>
        <position position="820"/>
    </location>
    <ligand>
        <name>ATP</name>
        <dbReference type="ChEBI" id="CHEBI:30616"/>
        <label>2</label>
    </ligand>
</feature>
<feature type="binding site" evidence="1">
    <location>
        <position position="820"/>
    </location>
    <ligand>
        <name>Mg(2+)</name>
        <dbReference type="ChEBI" id="CHEBI:18420"/>
        <label>3</label>
    </ligand>
</feature>
<feature type="binding site" evidence="1">
    <location>
        <position position="820"/>
    </location>
    <ligand>
        <name>Mn(2+)</name>
        <dbReference type="ChEBI" id="CHEBI:29035"/>
        <label>3</label>
    </ligand>
</feature>
<feature type="binding site" evidence="1">
    <location>
        <position position="832"/>
    </location>
    <ligand>
        <name>ATP</name>
        <dbReference type="ChEBI" id="CHEBI:30616"/>
        <label>2</label>
    </ligand>
</feature>
<feature type="binding site" evidence="1">
    <location>
        <position position="832"/>
    </location>
    <ligand>
        <name>Mg(2+)</name>
        <dbReference type="ChEBI" id="CHEBI:18420"/>
        <label>3</label>
    </ligand>
</feature>
<feature type="binding site" evidence="1">
    <location>
        <position position="832"/>
    </location>
    <ligand>
        <name>Mg(2+)</name>
        <dbReference type="ChEBI" id="CHEBI:18420"/>
        <label>4</label>
    </ligand>
</feature>
<feature type="binding site" evidence="1">
    <location>
        <position position="832"/>
    </location>
    <ligand>
        <name>Mn(2+)</name>
        <dbReference type="ChEBI" id="CHEBI:29035"/>
        <label>3</label>
    </ligand>
</feature>
<feature type="binding site" evidence="1">
    <location>
        <position position="832"/>
    </location>
    <ligand>
        <name>Mn(2+)</name>
        <dbReference type="ChEBI" id="CHEBI:29035"/>
        <label>4</label>
    </ligand>
</feature>
<feature type="binding site" evidence="1">
    <location>
        <position position="834"/>
    </location>
    <ligand>
        <name>Mg(2+)</name>
        <dbReference type="ChEBI" id="CHEBI:18420"/>
        <label>4</label>
    </ligand>
</feature>
<feature type="binding site" evidence="1">
    <location>
        <position position="834"/>
    </location>
    <ligand>
        <name>Mn(2+)</name>
        <dbReference type="ChEBI" id="CHEBI:29035"/>
        <label>4</label>
    </ligand>
</feature>
<proteinExistence type="inferred from homology"/>
<dbReference type="EC" id="6.3.4.16" evidence="1"/>
<dbReference type="EC" id="6.3.5.5" evidence="1"/>
<dbReference type="EMBL" id="AE016879">
    <property type="protein sequence ID" value="AAP27752.1"/>
    <property type="molecule type" value="Genomic_DNA"/>
</dbReference>
<dbReference type="EMBL" id="AE017334">
    <property type="protein sequence ID" value="AAT33142.1"/>
    <property type="molecule type" value="Genomic_DNA"/>
</dbReference>
<dbReference type="EMBL" id="AE017225">
    <property type="protein sequence ID" value="AAT56039.1"/>
    <property type="molecule type" value="Genomic_DNA"/>
</dbReference>
<dbReference type="RefSeq" id="NP_846266.1">
    <property type="nucleotide sequence ID" value="NC_003997.3"/>
</dbReference>
<dbReference type="RefSeq" id="WP_001126118.1">
    <property type="nucleotide sequence ID" value="NZ_WXXJ01000026.1"/>
</dbReference>
<dbReference type="RefSeq" id="YP_029988.1">
    <property type="nucleotide sequence ID" value="NC_005945.1"/>
</dbReference>
<dbReference type="SMR" id="Q81WF2"/>
<dbReference type="IntAct" id="Q81WF2">
    <property type="interactions" value="5"/>
</dbReference>
<dbReference type="STRING" id="261594.GBAA_4025"/>
<dbReference type="GeneID" id="45023715"/>
<dbReference type="KEGG" id="ban:BA_4025"/>
<dbReference type="KEGG" id="bar:GBAA_4025"/>
<dbReference type="KEGG" id="bat:BAS3737"/>
<dbReference type="PATRIC" id="fig|198094.11.peg.3996"/>
<dbReference type="eggNOG" id="COG0458">
    <property type="taxonomic scope" value="Bacteria"/>
</dbReference>
<dbReference type="HOGENOM" id="CLU_000513_1_0_9"/>
<dbReference type="OMA" id="FPFNKFP"/>
<dbReference type="OrthoDB" id="9804197at2"/>
<dbReference type="UniPathway" id="UPA00068">
    <property type="reaction ID" value="UER00171"/>
</dbReference>
<dbReference type="UniPathway" id="UPA00070">
    <property type="reaction ID" value="UER00115"/>
</dbReference>
<dbReference type="Proteomes" id="UP000000427">
    <property type="component" value="Chromosome"/>
</dbReference>
<dbReference type="Proteomes" id="UP000000594">
    <property type="component" value="Chromosome"/>
</dbReference>
<dbReference type="GO" id="GO:0005737">
    <property type="term" value="C:cytoplasm"/>
    <property type="evidence" value="ECO:0007669"/>
    <property type="project" value="TreeGrafter"/>
</dbReference>
<dbReference type="GO" id="GO:0005524">
    <property type="term" value="F:ATP binding"/>
    <property type="evidence" value="ECO:0007669"/>
    <property type="project" value="UniProtKB-UniRule"/>
</dbReference>
<dbReference type="GO" id="GO:0004087">
    <property type="term" value="F:carbamoyl-phosphate synthase (ammonia) activity"/>
    <property type="evidence" value="ECO:0007669"/>
    <property type="project" value="RHEA"/>
</dbReference>
<dbReference type="GO" id="GO:0004088">
    <property type="term" value="F:carbamoyl-phosphate synthase (glutamine-hydrolyzing) activity"/>
    <property type="evidence" value="ECO:0007669"/>
    <property type="project" value="UniProtKB-UniRule"/>
</dbReference>
<dbReference type="GO" id="GO:0046872">
    <property type="term" value="F:metal ion binding"/>
    <property type="evidence" value="ECO:0007669"/>
    <property type="project" value="UniProtKB-KW"/>
</dbReference>
<dbReference type="GO" id="GO:0044205">
    <property type="term" value="P:'de novo' UMP biosynthetic process"/>
    <property type="evidence" value="ECO:0007669"/>
    <property type="project" value="UniProtKB-UniRule"/>
</dbReference>
<dbReference type="GO" id="GO:0006541">
    <property type="term" value="P:glutamine metabolic process"/>
    <property type="evidence" value="ECO:0007669"/>
    <property type="project" value="TreeGrafter"/>
</dbReference>
<dbReference type="GO" id="GO:0006526">
    <property type="term" value="P:L-arginine biosynthetic process"/>
    <property type="evidence" value="ECO:0007669"/>
    <property type="project" value="UniProtKB-UniRule"/>
</dbReference>
<dbReference type="CDD" id="cd01424">
    <property type="entry name" value="MGS_CPS_II"/>
    <property type="match status" value="1"/>
</dbReference>
<dbReference type="FunFam" id="1.10.1030.10:FF:000002">
    <property type="entry name" value="Carbamoyl-phosphate synthase large chain"/>
    <property type="match status" value="1"/>
</dbReference>
<dbReference type="FunFam" id="3.30.1490.20:FF:000001">
    <property type="entry name" value="Carbamoyl-phosphate synthase large chain"/>
    <property type="match status" value="1"/>
</dbReference>
<dbReference type="FunFam" id="3.30.470.20:FF:000001">
    <property type="entry name" value="Carbamoyl-phosphate synthase large chain"/>
    <property type="match status" value="1"/>
</dbReference>
<dbReference type="FunFam" id="3.30.470.20:FF:000026">
    <property type="entry name" value="Carbamoyl-phosphate synthase large chain"/>
    <property type="match status" value="1"/>
</dbReference>
<dbReference type="FunFam" id="3.40.50.1380:FF:000011">
    <property type="entry name" value="Carbamoyl-phosphate synthase large chain"/>
    <property type="match status" value="1"/>
</dbReference>
<dbReference type="FunFam" id="3.40.50.20:FF:000001">
    <property type="entry name" value="Carbamoyl-phosphate synthase large chain"/>
    <property type="match status" value="2"/>
</dbReference>
<dbReference type="Gene3D" id="3.40.50.20">
    <property type="match status" value="2"/>
</dbReference>
<dbReference type="Gene3D" id="3.30.1490.20">
    <property type="entry name" value="ATP-grasp fold, A domain"/>
    <property type="match status" value="1"/>
</dbReference>
<dbReference type="Gene3D" id="3.30.470.20">
    <property type="entry name" value="ATP-grasp fold, B domain"/>
    <property type="match status" value="2"/>
</dbReference>
<dbReference type="Gene3D" id="1.10.1030.10">
    <property type="entry name" value="Carbamoyl-phosphate synthetase, large subunit oligomerisation domain"/>
    <property type="match status" value="1"/>
</dbReference>
<dbReference type="Gene3D" id="3.40.50.1380">
    <property type="entry name" value="Methylglyoxal synthase-like domain"/>
    <property type="match status" value="1"/>
</dbReference>
<dbReference type="HAMAP" id="MF_01210_A">
    <property type="entry name" value="CPSase_L_chain_A"/>
    <property type="match status" value="1"/>
</dbReference>
<dbReference type="HAMAP" id="MF_01210_B">
    <property type="entry name" value="CPSase_L_chain_B"/>
    <property type="match status" value="1"/>
</dbReference>
<dbReference type="InterPro" id="IPR011761">
    <property type="entry name" value="ATP-grasp"/>
</dbReference>
<dbReference type="InterPro" id="IPR013815">
    <property type="entry name" value="ATP_grasp_subdomain_1"/>
</dbReference>
<dbReference type="InterPro" id="IPR006275">
    <property type="entry name" value="CarbamoylP_synth_lsu"/>
</dbReference>
<dbReference type="InterPro" id="IPR005480">
    <property type="entry name" value="CarbamoylP_synth_lsu_oligo"/>
</dbReference>
<dbReference type="InterPro" id="IPR036897">
    <property type="entry name" value="CarbamoylP_synth_lsu_oligo_sf"/>
</dbReference>
<dbReference type="InterPro" id="IPR005479">
    <property type="entry name" value="CbamoylP_synth_lsu-like_ATP-bd"/>
</dbReference>
<dbReference type="InterPro" id="IPR005483">
    <property type="entry name" value="CbamoylP_synth_lsu_CPSase_dom"/>
</dbReference>
<dbReference type="InterPro" id="IPR011607">
    <property type="entry name" value="MGS-like_dom"/>
</dbReference>
<dbReference type="InterPro" id="IPR036914">
    <property type="entry name" value="MGS-like_dom_sf"/>
</dbReference>
<dbReference type="InterPro" id="IPR033937">
    <property type="entry name" value="MGS_CPS_CarB"/>
</dbReference>
<dbReference type="InterPro" id="IPR016185">
    <property type="entry name" value="PreATP-grasp_dom_sf"/>
</dbReference>
<dbReference type="NCBIfam" id="TIGR01369">
    <property type="entry name" value="CPSaseII_lrg"/>
    <property type="match status" value="1"/>
</dbReference>
<dbReference type="NCBIfam" id="NF003671">
    <property type="entry name" value="PRK05294.1"/>
    <property type="match status" value="1"/>
</dbReference>
<dbReference type="NCBIfam" id="NF009455">
    <property type="entry name" value="PRK12815.1"/>
    <property type="match status" value="1"/>
</dbReference>
<dbReference type="PANTHER" id="PTHR11405:SF53">
    <property type="entry name" value="CARBAMOYL-PHOSPHATE SYNTHASE [AMMONIA], MITOCHONDRIAL"/>
    <property type="match status" value="1"/>
</dbReference>
<dbReference type="PANTHER" id="PTHR11405">
    <property type="entry name" value="CARBAMOYLTRANSFERASE FAMILY MEMBER"/>
    <property type="match status" value="1"/>
</dbReference>
<dbReference type="Pfam" id="PF02786">
    <property type="entry name" value="CPSase_L_D2"/>
    <property type="match status" value="2"/>
</dbReference>
<dbReference type="Pfam" id="PF02787">
    <property type="entry name" value="CPSase_L_D3"/>
    <property type="match status" value="1"/>
</dbReference>
<dbReference type="Pfam" id="PF02142">
    <property type="entry name" value="MGS"/>
    <property type="match status" value="1"/>
</dbReference>
<dbReference type="PRINTS" id="PR00098">
    <property type="entry name" value="CPSASE"/>
</dbReference>
<dbReference type="SMART" id="SM01096">
    <property type="entry name" value="CPSase_L_D3"/>
    <property type="match status" value="1"/>
</dbReference>
<dbReference type="SMART" id="SM01209">
    <property type="entry name" value="GARS_A"/>
    <property type="match status" value="1"/>
</dbReference>
<dbReference type="SMART" id="SM00851">
    <property type="entry name" value="MGS"/>
    <property type="match status" value="1"/>
</dbReference>
<dbReference type="SUPFAM" id="SSF48108">
    <property type="entry name" value="Carbamoyl phosphate synthetase, large subunit connection domain"/>
    <property type="match status" value="1"/>
</dbReference>
<dbReference type="SUPFAM" id="SSF56059">
    <property type="entry name" value="Glutathione synthetase ATP-binding domain-like"/>
    <property type="match status" value="2"/>
</dbReference>
<dbReference type="SUPFAM" id="SSF52335">
    <property type="entry name" value="Methylglyoxal synthase-like"/>
    <property type="match status" value="1"/>
</dbReference>
<dbReference type="SUPFAM" id="SSF52440">
    <property type="entry name" value="PreATP-grasp domain"/>
    <property type="match status" value="2"/>
</dbReference>
<dbReference type="PROSITE" id="PS50975">
    <property type="entry name" value="ATP_GRASP"/>
    <property type="match status" value="2"/>
</dbReference>
<dbReference type="PROSITE" id="PS00866">
    <property type="entry name" value="CPSASE_1"/>
    <property type="match status" value="2"/>
</dbReference>
<dbReference type="PROSITE" id="PS00867">
    <property type="entry name" value="CPSASE_2"/>
    <property type="match status" value="2"/>
</dbReference>
<dbReference type="PROSITE" id="PS51855">
    <property type="entry name" value="MGS"/>
    <property type="match status" value="1"/>
</dbReference>
<keyword id="KW-0028">Amino-acid biosynthesis</keyword>
<keyword id="KW-0055">Arginine biosynthesis</keyword>
<keyword id="KW-0067">ATP-binding</keyword>
<keyword id="KW-0436">Ligase</keyword>
<keyword id="KW-0460">Magnesium</keyword>
<keyword id="KW-0464">Manganese</keyword>
<keyword id="KW-0479">Metal-binding</keyword>
<keyword id="KW-0547">Nucleotide-binding</keyword>
<keyword id="KW-0665">Pyrimidine biosynthesis</keyword>
<keyword id="KW-1185">Reference proteome</keyword>
<keyword id="KW-0677">Repeat</keyword>
<accession>Q81WF2</accession>
<accession>Q6HUK0</accession>
<accession>Q6KNT5</accession>
<reference key="1">
    <citation type="journal article" date="2003" name="Nature">
        <title>The genome sequence of Bacillus anthracis Ames and comparison to closely related bacteria.</title>
        <authorList>
            <person name="Read T.D."/>
            <person name="Peterson S.N."/>
            <person name="Tourasse N.J."/>
            <person name="Baillie L.W."/>
            <person name="Paulsen I.T."/>
            <person name="Nelson K.E."/>
            <person name="Tettelin H."/>
            <person name="Fouts D.E."/>
            <person name="Eisen J.A."/>
            <person name="Gill S.R."/>
            <person name="Holtzapple E.K."/>
            <person name="Okstad O.A."/>
            <person name="Helgason E."/>
            <person name="Rilstone J."/>
            <person name="Wu M."/>
            <person name="Kolonay J.F."/>
            <person name="Beanan M.J."/>
            <person name="Dodson R.J."/>
            <person name="Brinkac L.M."/>
            <person name="Gwinn M.L."/>
            <person name="DeBoy R.T."/>
            <person name="Madpu R."/>
            <person name="Daugherty S.C."/>
            <person name="Durkin A.S."/>
            <person name="Haft D.H."/>
            <person name="Nelson W.C."/>
            <person name="Peterson J.D."/>
            <person name="Pop M."/>
            <person name="Khouri H.M."/>
            <person name="Radune D."/>
            <person name="Benton J.L."/>
            <person name="Mahamoud Y."/>
            <person name="Jiang L."/>
            <person name="Hance I.R."/>
            <person name="Weidman J.F."/>
            <person name="Berry K.J."/>
            <person name="Plaut R.D."/>
            <person name="Wolf A.M."/>
            <person name="Watkins K.L."/>
            <person name="Nierman W.C."/>
            <person name="Hazen A."/>
            <person name="Cline R.T."/>
            <person name="Redmond C."/>
            <person name="Thwaite J.E."/>
            <person name="White O."/>
            <person name="Salzberg S.L."/>
            <person name="Thomason B."/>
            <person name="Friedlander A.M."/>
            <person name="Koehler T.M."/>
            <person name="Hanna P.C."/>
            <person name="Kolstoe A.-B."/>
            <person name="Fraser C.M."/>
        </authorList>
    </citation>
    <scope>NUCLEOTIDE SEQUENCE [LARGE SCALE GENOMIC DNA]</scope>
    <source>
        <strain>Ames / isolate Porton</strain>
    </source>
</reference>
<reference key="2">
    <citation type="submission" date="2004-01" db="EMBL/GenBank/DDBJ databases">
        <title>Complete genome sequence of Bacillus anthracis Sterne.</title>
        <authorList>
            <person name="Brettin T.S."/>
            <person name="Bruce D."/>
            <person name="Challacombe J.F."/>
            <person name="Gilna P."/>
            <person name="Han C."/>
            <person name="Hill K."/>
            <person name="Hitchcock P."/>
            <person name="Jackson P."/>
            <person name="Keim P."/>
            <person name="Longmire J."/>
            <person name="Lucas S."/>
            <person name="Okinaka R."/>
            <person name="Richardson P."/>
            <person name="Rubin E."/>
            <person name="Tice H."/>
        </authorList>
    </citation>
    <scope>NUCLEOTIDE SEQUENCE [LARGE SCALE GENOMIC DNA]</scope>
    <source>
        <strain>Sterne</strain>
    </source>
</reference>
<reference key="3">
    <citation type="journal article" date="2009" name="J. Bacteriol.">
        <title>The complete genome sequence of Bacillus anthracis Ames 'Ancestor'.</title>
        <authorList>
            <person name="Ravel J."/>
            <person name="Jiang L."/>
            <person name="Stanley S.T."/>
            <person name="Wilson M.R."/>
            <person name="Decker R.S."/>
            <person name="Read T.D."/>
            <person name="Worsham P."/>
            <person name="Keim P.S."/>
            <person name="Salzberg S.L."/>
            <person name="Fraser-Liggett C.M."/>
            <person name="Rasko D.A."/>
        </authorList>
    </citation>
    <scope>NUCLEOTIDE SEQUENCE [LARGE SCALE GENOMIC DNA]</scope>
    <source>
        <strain>Ames ancestor</strain>
    </source>
</reference>
<name>CARB_BACAN</name>
<comment type="function">
    <text evidence="1">Large subunit of the glutamine-dependent carbamoyl phosphate synthetase (CPSase). CPSase catalyzes the formation of carbamoyl phosphate from the ammonia moiety of glutamine, carbonate, and phosphate donated by ATP, constituting the first step of 2 biosynthetic pathways, one leading to arginine and/or urea and the other to pyrimidine nucleotides. The large subunit (synthetase) binds the substrates ammonia (free or transferred from glutamine from the small subunit), hydrogencarbonate and ATP and carries out an ATP-coupled ligase reaction, activating hydrogencarbonate by forming carboxy phosphate which reacts with ammonia to form carbamoyl phosphate.</text>
</comment>
<comment type="catalytic activity">
    <reaction evidence="1">
        <text>hydrogencarbonate + L-glutamine + 2 ATP + H2O = carbamoyl phosphate + L-glutamate + 2 ADP + phosphate + 2 H(+)</text>
        <dbReference type="Rhea" id="RHEA:18633"/>
        <dbReference type="ChEBI" id="CHEBI:15377"/>
        <dbReference type="ChEBI" id="CHEBI:15378"/>
        <dbReference type="ChEBI" id="CHEBI:17544"/>
        <dbReference type="ChEBI" id="CHEBI:29985"/>
        <dbReference type="ChEBI" id="CHEBI:30616"/>
        <dbReference type="ChEBI" id="CHEBI:43474"/>
        <dbReference type="ChEBI" id="CHEBI:58228"/>
        <dbReference type="ChEBI" id="CHEBI:58359"/>
        <dbReference type="ChEBI" id="CHEBI:456216"/>
        <dbReference type="EC" id="6.3.5.5"/>
    </reaction>
</comment>
<comment type="catalytic activity">
    <molecule>Carbamoyl phosphate synthase large chain</molecule>
    <reaction evidence="1">
        <text>hydrogencarbonate + NH4(+) + 2 ATP = carbamoyl phosphate + 2 ADP + phosphate + 2 H(+)</text>
        <dbReference type="Rhea" id="RHEA:18029"/>
        <dbReference type="ChEBI" id="CHEBI:15378"/>
        <dbReference type="ChEBI" id="CHEBI:17544"/>
        <dbReference type="ChEBI" id="CHEBI:28938"/>
        <dbReference type="ChEBI" id="CHEBI:30616"/>
        <dbReference type="ChEBI" id="CHEBI:43474"/>
        <dbReference type="ChEBI" id="CHEBI:58228"/>
        <dbReference type="ChEBI" id="CHEBI:456216"/>
        <dbReference type="EC" id="6.3.4.16"/>
    </reaction>
</comment>
<comment type="cofactor">
    <cofactor evidence="1">
        <name>Mg(2+)</name>
        <dbReference type="ChEBI" id="CHEBI:18420"/>
    </cofactor>
    <cofactor evidence="1">
        <name>Mn(2+)</name>
        <dbReference type="ChEBI" id="CHEBI:29035"/>
    </cofactor>
    <text evidence="1">Binds 4 Mg(2+) or Mn(2+) ions per subunit.</text>
</comment>
<comment type="pathway">
    <text evidence="1">Amino-acid biosynthesis; L-arginine biosynthesis; carbamoyl phosphate from bicarbonate: step 1/1.</text>
</comment>
<comment type="pathway">
    <text evidence="1">Pyrimidine metabolism; UMP biosynthesis via de novo pathway; (S)-dihydroorotate from bicarbonate: step 1/3.</text>
</comment>
<comment type="subunit">
    <text evidence="1">Composed of two chains; the small (or glutamine) chain promotes the hydrolysis of glutamine to ammonia, which is used by the large (or ammonia) chain to synthesize carbamoyl phosphate. Tetramer of heterodimers (alpha,beta)4.</text>
</comment>
<comment type="domain">
    <text evidence="1">The large subunit is composed of 2 ATP-grasp domains that are involved in binding the 2 ATP molecules needed for carbamoyl phosphate synthesis. The N-terminal ATP-grasp domain (referred to as the carboxyphosphate synthetic component) catalyzes the ATP-dependent phosphorylation of hydrogencarbonate to carboxyphosphate and the subsequent nucleophilic attack by ammonia to form a carbamate intermediate. The C-terminal ATP-grasp domain (referred to as the carbamoyl phosphate synthetic component) then catalyzes the phosphorylation of carbamate with the second ATP to form the end product carbamoyl phosphate. The reactive and unstable enzyme intermediates are sequentially channeled from one active site to the next through the interior of the protein over a distance of at least 96 A.</text>
</comment>
<comment type="similarity">
    <text evidence="1">Belongs to the CarB family.</text>
</comment>